<protein>
    <recommendedName>
        <fullName>NADH dehydrogenase [ubiquinone] 1 alpha subcomplex subunit 9, mitochondrial</fullName>
    </recommendedName>
    <alternativeName>
        <fullName>Complex I-39kD</fullName>
        <shortName>CI-39kD</shortName>
    </alternativeName>
    <alternativeName>
        <fullName>NADH-ubiquinone oxidoreductase 39 kDa subunit</fullName>
    </alternativeName>
</protein>
<dbReference type="EMBL" id="DQ885721">
    <property type="protein sequence ID" value="ABH12230.1"/>
    <property type="status" value="ALT_INIT"/>
    <property type="molecule type" value="mRNA"/>
</dbReference>
<dbReference type="RefSeq" id="NP_001266630.2">
    <property type="nucleotide sequence ID" value="NM_001279701.2"/>
</dbReference>
<dbReference type="SMR" id="Q0MQB3"/>
<dbReference type="FunCoup" id="Q0MQB3">
    <property type="interactions" value="2424"/>
</dbReference>
<dbReference type="STRING" id="9593.ENSGGOP00000021812"/>
<dbReference type="Ensembl" id="ENSGGOT00000006107.3">
    <property type="protein sequence ID" value="ENSGGOP00000005949.3"/>
    <property type="gene ID" value="ENSGGOG00000006076.3"/>
</dbReference>
<dbReference type="GeneID" id="101144771"/>
<dbReference type="KEGG" id="ggo:101144771"/>
<dbReference type="CTD" id="4704"/>
<dbReference type="eggNOG" id="KOG2865">
    <property type="taxonomic scope" value="Eukaryota"/>
</dbReference>
<dbReference type="GeneTree" id="ENSGT00390000006865"/>
<dbReference type="HOGENOM" id="CLU_007383_6_4_1"/>
<dbReference type="InParanoid" id="Q0MQB3"/>
<dbReference type="Proteomes" id="UP000001519">
    <property type="component" value="Chromosome 12"/>
</dbReference>
<dbReference type="Bgee" id="ENSGGOG00000006076">
    <property type="expression patterns" value="Expressed in heart and 6 other cell types or tissues"/>
</dbReference>
<dbReference type="GO" id="GO:0005759">
    <property type="term" value="C:mitochondrial matrix"/>
    <property type="evidence" value="ECO:0007669"/>
    <property type="project" value="UniProtKB-SubCell"/>
</dbReference>
<dbReference type="GO" id="GO:0005739">
    <property type="term" value="C:mitochondrion"/>
    <property type="evidence" value="ECO:0000318"/>
    <property type="project" value="GO_Central"/>
</dbReference>
<dbReference type="GO" id="GO:0045271">
    <property type="term" value="C:respiratory chain complex I"/>
    <property type="evidence" value="ECO:0000250"/>
    <property type="project" value="UniProtKB"/>
</dbReference>
<dbReference type="GO" id="GO:0044877">
    <property type="term" value="F:protein-containing complex binding"/>
    <property type="evidence" value="ECO:0000318"/>
    <property type="project" value="GO_Central"/>
</dbReference>
<dbReference type="GO" id="GO:0006744">
    <property type="term" value="P:ubiquinone biosynthetic process"/>
    <property type="evidence" value="ECO:0000318"/>
    <property type="project" value="GO_Central"/>
</dbReference>
<dbReference type="CDD" id="cd05271">
    <property type="entry name" value="NDUFA9_like_SDR_a"/>
    <property type="match status" value="1"/>
</dbReference>
<dbReference type="FunFam" id="3.40.50.720:FF:000246">
    <property type="entry name" value="NADH dehydrogenase [ubiquinone] 1 alpha subcomplex subunit 9, mitochondrial"/>
    <property type="match status" value="1"/>
</dbReference>
<dbReference type="Gene3D" id="3.40.50.720">
    <property type="entry name" value="NAD(P)-binding Rossmann-like Domain"/>
    <property type="match status" value="1"/>
</dbReference>
<dbReference type="InterPro" id="IPR051207">
    <property type="entry name" value="ComplexI_NDUFA9_subunit"/>
</dbReference>
<dbReference type="InterPro" id="IPR001509">
    <property type="entry name" value="Epimerase_deHydtase"/>
</dbReference>
<dbReference type="InterPro" id="IPR036291">
    <property type="entry name" value="NAD(P)-bd_dom_sf"/>
</dbReference>
<dbReference type="PANTHER" id="PTHR12126:SF10">
    <property type="entry name" value="NADH DEHYDROGENASE [UBIQUINONE] 1 ALPHA SUBCOMPLEX SUBUNIT 9, MITOCHONDRIAL"/>
    <property type="match status" value="1"/>
</dbReference>
<dbReference type="PANTHER" id="PTHR12126">
    <property type="entry name" value="NADH-UBIQUINONE OXIDOREDUCTASE 39 KDA SUBUNIT-RELATED"/>
    <property type="match status" value="1"/>
</dbReference>
<dbReference type="Pfam" id="PF01370">
    <property type="entry name" value="Epimerase"/>
    <property type="match status" value="1"/>
</dbReference>
<dbReference type="SUPFAM" id="SSF51735">
    <property type="entry name" value="NAD(P)-binding Rossmann-fold domains"/>
    <property type="match status" value="1"/>
</dbReference>
<proteinExistence type="evidence at transcript level"/>
<evidence type="ECO:0000250" key="1"/>
<evidence type="ECO:0000250" key="2">
    <source>
        <dbReference type="UniProtKB" id="Q16795"/>
    </source>
</evidence>
<evidence type="ECO:0000250" key="3">
    <source>
        <dbReference type="UniProtKB" id="Q5BK63"/>
    </source>
</evidence>
<evidence type="ECO:0000250" key="4">
    <source>
        <dbReference type="UniProtKB" id="Q9DC69"/>
    </source>
</evidence>
<evidence type="ECO:0000305" key="5"/>
<gene>
    <name type="primary">NDUFA9</name>
</gene>
<comment type="function">
    <text evidence="2">Accessory subunit of the mitochondrial membrane respiratory chain NADH dehydrogenase (Complex I), that is believed not to be involved in catalysis. Complex I functions in the transfer of electrons from NADH to the respiratory chain. The immediate electron acceptor for the enzyme is believed to be ubiquinone.</text>
</comment>
<comment type="cofactor">
    <cofactor evidence="1">
        <name>FAD</name>
        <dbReference type="ChEBI" id="CHEBI:57692"/>
    </cofactor>
    <text evidence="1">Binds 1 FAD per subunit.</text>
</comment>
<comment type="subunit">
    <text evidence="2 3">Complex I is composed of 45 different subunits (By similarity). This a component of the hydrophobic protein fraction (By similarity). Interacts with BLOC1S1 (By similarity). Interacts with SLC2A4 (By similarity). Interacts with CLOCK (By similarity). Interacts with RAB5IF (By similarity).</text>
</comment>
<comment type="subcellular location">
    <subcellularLocation>
        <location evidence="2">Mitochondrion matrix</location>
    </subcellularLocation>
</comment>
<comment type="PTM">
    <text evidence="2">Acetylated on lysine residues. BLOC1S1 is required for acetylation.</text>
</comment>
<comment type="similarity">
    <text evidence="5">Belongs to the complex I NDUFA9 subunit family.</text>
</comment>
<comment type="sequence caution" evidence="5">
    <conflict type="erroneous initiation">
        <sequence resource="EMBL-CDS" id="ABH12230"/>
    </conflict>
</comment>
<accession>Q0MQB3</accession>
<reference key="1">
    <citation type="journal article" date="2006" name="Gene">
        <title>Adaptive selection of mitochondrial complex I subunits during primate radiation.</title>
        <authorList>
            <person name="Mishmar D."/>
            <person name="Ruiz-Pesini E."/>
            <person name="Mondragon-Palomino M."/>
            <person name="Procaccio V."/>
            <person name="Gaut B."/>
            <person name="Wallace D.C."/>
        </authorList>
    </citation>
    <scope>NUCLEOTIDE SEQUENCE [MRNA]</scope>
</reference>
<name>NDUA9_GORGO</name>
<sequence length="377" mass="42506">MAAAAQSRVVRVLSMSRSAITAIATSVCHGPPCRQLHHALIPHGKGGRSSVSGIVATVFGATGFLGRYVVNHLGRMGSQVIIPYRCDKYDIMHLRPMGDLGQLLFLEWDARDKDSIRRVVQHSNVVINLIGRDWETKNFDFEDVFVKIPQAIAQLSKEAGVEKFIHVSHLNANIKSSSRYLRNKAVGEKVVRDAFPEAIIIKPSDIFGREDRFLNSFASMHRFGPIPLGSLGWKTVKQPVYVVDVSKGIVNAVKDPDANGKSFAFVGPSRYLLFHLVKYIFAVAHRLFLPFPLPLFAYRWVARVFEISPFEPWITRDKVERMHITDMKLPHLPGLEDLGIQATPLELKAIEVLRRHRTYRWLSAEIEDVKPAKTVNI</sequence>
<feature type="transit peptide" description="Mitochondrion" evidence="1">
    <location>
        <begin position="1"/>
        <end position="35"/>
    </location>
</feature>
<feature type="chain" id="PRO_0000251810" description="NADH dehydrogenase [ubiquinone] 1 alpha subcomplex subunit 9, mitochondrial">
    <location>
        <begin position="36"/>
        <end position="377"/>
    </location>
</feature>
<feature type="modified residue" description="N6-succinyllysine" evidence="4">
    <location>
        <position position="175"/>
    </location>
</feature>
<feature type="modified residue" description="N6-acetyllysine" evidence="4">
    <location>
        <position position="189"/>
    </location>
</feature>
<feature type="modified residue" description="N6-acetyllysine" evidence="4">
    <location>
        <position position="370"/>
    </location>
</feature>
<organism>
    <name type="scientific">Gorilla gorilla gorilla</name>
    <name type="common">Western lowland gorilla</name>
    <dbReference type="NCBI Taxonomy" id="9595"/>
    <lineage>
        <taxon>Eukaryota</taxon>
        <taxon>Metazoa</taxon>
        <taxon>Chordata</taxon>
        <taxon>Craniata</taxon>
        <taxon>Vertebrata</taxon>
        <taxon>Euteleostomi</taxon>
        <taxon>Mammalia</taxon>
        <taxon>Eutheria</taxon>
        <taxon>Euarchontoglires</taxon>
        <taxon>Primates</taxon>
        <taxon>Haplorrhini</taxon>
        <taxon>Catarrhini</taxon>
        <taxon>Hominidae</taxon>
        <taxon>Gorilla</taxon>
    </lineage>
</organism>
<keyword id="KW-0007">Acetylation</keyword>
<keyword id="KW-0249">Electron transport</keyword>
<keyword id="KW-0274">FAD</keyword>
<keyword id="KW-0285">Flavoprotein</keyword>
<keyword id="KW-0496">Mitochondrion</keyword>
<keyword id="KW-1185">Reference proteome</keyword>
<keyword id="KW-0679">Respiratory chain</keyword>
<keyword id="KW-0809">Transit peptide</keyword>
<keyword id="KW-0813">Transport</keyword>